<accession>O25893</accession>
<feature type="chain" id="PRO_0000121637" description="tRNA-specific 2-thiouridylase MnmA">
    <location>
        <begin position="1"/>
        <end position="342"/>
    </location>
</feature>
<feature type="region of interest" description="Interaction with tRNA" evidence="1">
    <location>
        <begin position="138"/>
        <end position="140"/>
    </location>
</feature>
<feature type="region of interest" description="Interaction with tRNA" evidence="1">
    <location>
        <begin position="293"/>
        <end position="294"/>
    </location>
</feature>
<feature type="active site" description="Nucleophile" evidence="1">
    <location>
        <position position="92"/>
    </location>
</feature>
<feature type="active site" description="Cysteine persulfide intermediate" evidence="1">
    <location>
        <position position="191"/>
    </location>
</feature>
<feature type="binding site" evidence="1">
    <location>
        <begin position="6"/>
        <end position="13"/>
    </location>
    <ligand>
        <name>ATP</name>
        <dbReference type="ChEBI" id="CHEBI:30616"/>
    </ligand>
</feature>
<feature type="binding site" evidence="1">
    <location>
        <position position="32"/>
    </location>
    <ligand>
        <name>ATP</name>
        <dbReference type="ChEBI" id="CHEBI:30616"/>
    </ligand>
</feature>
<feature type="binding site" evidence="1">
    <location>
        <position position="116"/>
    </location>
    <ligand>
        <name>ATP</name>
        <dbReference type="ChEBI" id="CHEBI:30616"/>
    </ligand>
</feature>
<feature type="site" description="Interaction with tRNA" evidence="1">
    <location>
        <position position="117"/>
    </location>
</feature>
<feature type="site" description="Interaction with tRNA" evidence="1">
    <location>
        <position position="325"/>
    </location>
</feature>
<feature type="disulfide bond" description="Alternate" evidence="1">
    <location>
        <begin position="92"/>
        <end position="191"/>
    </location>
</feature>
<comment type="function">
    <text evidence="1">Catalyzes the 2-thiolation of uridine at the wobble position (U34) of tRNA, leading to the formation of s(2)U34.</text>
</comment>
<comment type="catalytic activity">
    <reaction evidence="1">
        <text>S-sulfanyl-L-cysteinyl-[protein] + uridine(34) in tRNA + AH2 + ATP = 2-thiouridine(34) in tRNA + L-cysteinyl-[protein] + A + AMP + diphosphate + H(+)</text>
        <dbReference type="Rhea" id="RHEA:47032"/>
        <dbReference type="Rhea" id="RHEA-COMP:10131"/>
        <dbReference type="Rhea" id="RHEA-COMP:11726"/>
        <dbReference type="Rhea" id="RHEA-COMP:11727"/>
        <dbReference type="Rhea" id="RHEA-COMP:11728"/>
        <dbReference type="ChEBI" id="CHEBI:13193"/>
        <dbReference type="ChEBI" id="CHEBI:15378"/>
        <dbReference type="ChEBI" id="CHEBI:17499"/>
        <dbReference type="ChEBI" id="CHEBI:29950"/>
        <dbReference type="ChEBI" id="CHEBI:30616"/>
        <dbReference type="ChEBI" id="CHEBI:33019"/>
        <dbReference type="ChEBI" id="CHEBI:61963"/>
        <dbReference type="ChEBI" id="CHEBI:65315"/>
        <dbReference type="ChEBI" id="CHEBI:87170"/>
        <dbReference type="ChEBI" id="CHEBI:456215"/>
        <dbReference type="EC" id="2.8.1.13"/>
    </reaction>
</comment>
<comment type="subcellular location">
    <subcellularLocation>
        <location evidence="1">Cytoplasm</location>
    </subcellularLocation>
</comment>
<comment type="similarity">
    <text evidence="1">Belongs to the MnmA/TRMU family.</text>
</comment>
<comment type="sequence caution" evidence="2">
    <conflict type="erroneous initiation">
        <sequence resource="EMBL-CDS" id="AAD08378"/>
    </conflict>
</comment>
<organism>
    <name type="scientific">Helicobacter pylori (strain ATCC 700392 / 26695)</name>
    <name type="common">Campylobacter pylori</name>
    <dbReference type="NCBI Taxonomy" id="85962"/>
    <lineage>
        <taxon>Bacteria</taxon>
        <taxon>Pseudomonadati</taxon>
        <taxon>Campylobacterota</taxon>
        <taxon>Epsilonproteobacteria</taxon>
        <taxon>Campylobacterales</taxon>
        <taxon>Helicobacteraceae</taxon>
        <taxon>Helicobacter</taxon>
    </lineage>
</organism>
<name>MNMA_HELPY</name>
<gene>
    <name evidence="1" type="primary">mnmA</name>
    <name type="synonym">trmU</name>
    <name type="ordered locus">HP_1335</name>
</gene>
<dbReference type="EC" id="2.8.1.13" evidence="1"/>
<dbReference type="EMBL" id="AE000511">
    <property type="protein sequence ID" value="AAD08378.1"/>
    <property type="status" value="ALT_INIT"/>
    <property type="molecule type" value="Genomic_DNA"/>
</dbReference>
<dbReference type="PIR" id="G64686">
    <property type="entry name" value="G64686"/>
</dbReference>
<dbReference type="RefSeq" id="NP_208127.2">
    <property type="nucleotide sequence ID" value="NC_000915.1"/>
</dbReference>
<dbReference type="RefSeq" id="WP_000686217.1">
    <property type="nucleotide sequence ID" value="NC_018939.1"/>
</dbReference>
<dbReference type="SMR" id="O25893"/>
<dbReference type="FunCoup" id="O25893">
    <property type="interactions" value="378"/>
</dbReference>
<dbReference type="STRING" id="85962.HP_1335"/>
<dbReference type="PaxDb" id="85962-C694_06890"/>
<dbReference type="DNASU" id="899968"/>
<dbReference type="EnsemblBacteria" id="AAD08378">
    <property type="protein sequence ID" value="AAD08378"/>
    <property type="gene ID" value="HP_1335"/>
</dbReference>
<dbReference type="KEGG" id="heo:C694_06890"/>
<dbReference type="KEGG" id="hpy:HP_1335"/>
<dbReference type="PATRIC" id="fig|85962.47.peg.1430"/>
<dbReference type="eggNOG" id="COG0482">
    <property type="taxonomic scope" value="Bacteria"/>
</dbReference>
<dbReference type="InParanoid" id="O25893"/>
<dbReference type="OrthoDB" id="9800696at2"/>
<dbReference type="Proteomes" id="UP000000429">
    <property type="component" value="Chromosome"/>
</dbReference>
<dbReference type="GO" id="GO:0005737">
    <property type="term" value="C:cytoplasm"/>
    <property type="evidence" value="ECO:0007669"/>
    <property type="project" value="UniProtKB-SubCell"/>
</dbReference>
<dbReference type="GO" id="GO:0005524">
    <property type="term" value="F:ATP binding"/>
    <property type="evidence" value="ECO:0007669"/>
    <property type="project" value="UniProtKB-KW"/>
</dbReference>
<dbReference type="GO" id="GO:0000049">
    <property type="term" value="F:tRNA binding"/>
    <property type="evidence" value="ECO:0007669"/>
    <property type="project" value="UniProtKB-KW"/>
</dbReference>
<dbReference type="GO" id="GO:0103016">
    <property type="term" value="F:tRNA-uridine 2-sulfurtransferase activity"/>
    <property type="evidence" value="ECO:0007669"/>
    <property type="project" value="UniProtKB-EC"/>
</dbReference>
<dbReference type="GO" id="GO:0002143">
    <property type="term" value="P:tRNA wobble position uridine thiolation"/>
    <property type="evidence" value="ECO:0000318"/>
    <property type="project" value="GO_Central"/>
</dbReference>
<dbReference type="CDD" id="cd01998">
    <property type="entry name" value="MnmA_TRMU-like"/>
    <property type="match status" value="1"/>
</dbReference>
<dbReference type="FunFam" id="2.30.30.280:FF:000001">
    <property type="entry name" value="tRNA-specific 2-thiouridylase MnmA"/>
    <property type="match status" value="1"/>
</dbReference>
<dbReference type="FunFam" id="2.40.30.10:FF:000262">
    <property type="entry name" value="tRNA-specific 2-thiouridylase MnmA"/>
    <property type="match status" value="1"/>
</dbReference>
<dbReference type="FunFam" id="3.40.50.620:FF:000323">
    <property type="entry name" value="tRNA-specific 2-thiouridylase MnmA"/>
    <property type="match status" value="1"/>
</dbReference>
<dbReference type="Gene3D" id="2.30.30.280">
    <property type="entry name" value="Adenine nucleotide alpha hydrolases-like domains"/>
    <property type="match status" value="1"/>
</dbReference>
<dbReference type="Gene3D" id="3.40.50.620">
    <property type="entry name" value="HUPs"/>
    <property type="match status" value="1"/>
</dbReference>
<dbReference type="Gene3D" id="2.40.30.10">
    <property type="entry name" value="Translation factors"/>
    <property type="match status" value="1"/>
</dbReference>
<dbReference type="HAMAP" id="MF_00144">
    <property type="entry name" value="tRNA_thiouridyl_MnmA"/>
    <property type="match status" value="1"/>
</dbReference>
<dbReference type="InterPro" id="IPR004506">
    <property type="entry name" value="MnmA-like"/>
</dbReference>
<dbReference type="InterPro" id="IPR046885">
    <property type="entry name" value="MnmA-like_C"/>
</dbReference>
<dbReference type="InterPro" id="IPR046884">
    <property type="entry name" value="MnmA-like_central"/>
</dbReference>
<dbReference type="InterPro" id="IPR023382">
    <property type="entry name" value="MnmA-like_central_sf"/>
</dbReference>
<dbReference type="InterPro" id="IPR014729">
    <property type="entry name" value="Rossmann-like_a/b/a_fold"/>
</dbReference>
<dbReference type="NCBIfam" id="NF001138">
    <property type="entry name" value="PRK00143.1"/>
    <property type="match status" value="1"/>
</dbReference>
<dbReference type="NCBIfam" id="TIGR00420">
    <property type="entry name" value="trmU"/>
    <property type="match status" value="1"/>
</dbReference>
<dbReference type="PANTHER" id="PTHR11933:SF5">
    <property type="entry name" value="MITOCHONDRIAL TRNA-SPECIFIC 2-THIOURIDYLASE 1"/>
    <property type="match status" value="1"/>
</dbReference>
<dbReference type="PANTHER" id="PTHR11933">
    <property type="entry name" value="TRNA 5-METHYLAMINOMETHYL-2-THIOURIDYLATE -METHYLTRANSFERASE"/>
    <property type="match status" value="1"/>
</dbReference>
<dbReference type="Pfam" id="PF03054">
    <property type="entry name" value="tRNA_Me_trans"/>
    <property type="match status" value="1"/>
</dbReference>
<dbReference type="Pfam" id="PF20258">
    <property type="entry name" value="tRNA_Me_trans_C"/>
    <property type="match status" value="1"/>
</dbReference>
<dbReference type="Pfam" id="PF20259">
    <property type="entry name" value="tRNA_Me_trans_M"/>
    <property type="match status" value="1"/>
</dbReference>
<dbReference type="SUPFAM" id="SSF52402">
    <property type="entry name" value="Adenine nucleotide alpha hydrolases-like"/>
    <property type="match status" value="1"/>
</dbReference>
<protein>
    <recommendedName>
        <fullName evidence="1">tRNA-specific 2-thiouridylase MnmA</fullName>
        <ecNumber evidence="1">2.8.1.13</ecNumber>
    </recommendedName>
</protein>
<proteinExistence type="inferred from homology"/>
<keyword id="KW-0067">ATP-binding</keyword>
<keyword id="KW-0963">Cytoplasm</keyword>
<keyword id="KW-1015">Disulfide bond</keyword>
<keyword id="KW-0547">Nucleotide-binding</keyword>
<keyword id="KW-1185">Reference proteome</keyword>
<keyword id="KW-0694">RNA-binding</keyword>
<keyword id="KW-0808">Transferase</keyword>
<keyword id="KW-0819">tRNA processing</keyword>
<keyword id="KW-0820">tRNA-binding</keyword>
<evidence type="ECO:0000255" key="1">
    <source>
        <dbReference type="HAMAP-Rule" id="MF_00144"/>
    </source>
</evidence>
<evidence type="ECO:0000305" key="2"/>
<sequence>MKIAVLLSGGVDSSYSAYSLKEQGHELVGIYLKLHASEKKHDLYIKNAQKACEFLGIPLEVLDFQKDFKSAVYDEFINAYEEGQTPNPCALCNPLMKFGLALDHALKLGCEKIATGHYARVKEIDKISYIQEALDKTKDQSYFLYALEHEVIAKLVFPLGDLLKKDIKPLALNAMPFLGTLETYKESQEICFVEKSYIDTLKKHVEVEKEGVVKNLQGEVIGTHKGYMQYTIGKRKGFSIKGALEPHFVVGIDAKKNELVVGKKEDLATHSLKAKNKSLMKDFKDGEYFIKARYRSVPAKAHVSLKDEVIEVGFKEPFYGVAKGQALVVYKDDILLGGGVIV</sequence>
<reference key="1">
    <citation type="journal article" date="1997" name="Nature">
        <title>The complete genome sequence of the gastric pathogen Helicobacter pylori.</title>
        <authorList>
            <person name="Tomb J.-F."/>
            <person name="White O."/>
            <person name="Kerlavage A.R."/>
            <person name="Clayton R.A."/>
            <person name="Sutton G.G."/>
            <person name="Fleischmann R.D."/>
            <person name="Ketchum K.A."/>
            <person name="Klenk H.-P."/>
            <person name="Gill S.R."/>
            <person name="Dougherty B.A."/>
            <person name="Nelson K.E."/>
            <person name="Quackenbush J."/>
            <person name="Zhou L."/>
            <person name="Kirkness E.F."/>
            <person name="Peterson S.N."/>
            <person name="Loftus B.J."/>
            <person name="Richardson D.L."/>
            <person name="Dodson R.J."/>
            <person name="Khalak H.G."/>
            <person name="Glodek A."/>
            <person name="McKenney K."/>
            <person name="FitzGerald L.M."/>
            <person name="Lee N."/>
            <person name="Adams M.D."/>
            <person name="Hickey E.K."/>
            <person name="Berg D.E."/>
            <person name="Gocayne J.D."/>
            <person name="Utterback T.R."/>
            <person name="Peterson J.D."/>
            <person name="Kelley J.M."/>
            <person name="Cotton M.D."/>
            <person name="Weidman J.F."/>
            <person name="Fujii C."/>
            <person name="Bowman C."/>
            <person name="Watthey L."/>
            <person name="Wallin E."/>
            <person name="Hayes W.S."/>
            <person name="Borodovsky M."/>
            <person name="Karp P.D."/>
            <person name="Smith H.O."/>
            <person name="Fraser C.M."/>
            <person name="Venter J.C."/>
        </authorList>
    </citation>
    <scope>NUCLEOTIDE SEQUENCE [LARGE SCALE GENOMIC DNA]</scope>
    <source>
        <strain>ATCC 700392 / 26695</strain>
    </source>
</reference>